<dbReference type="EC" id="2.4.1.21" evidence="1"/>
<dbReference type="EMBL" id="CP000038">
    <property type="protein sequence ID" value="AAZ90216.1"/>
    <property type="molecule type" value="Genomic_DNA"/>
</dbReference>
<dbReference type="RefSeq" id="WP_001197643.1">
    <property type="nucleotide sequence ID" value="NC_007384.1"/>
</dbReference>
<dbReference type="SMR" id="Q3YW96"/>
<dbReference type="CAZy" id="GT5">
    <property type="family name" value="Glycosyltransferase Family 5"/>
</dbReference>
<dbReference type="GeneID" id="93778560"/>
<dbReference type="KEGG" id="ssn:SSON_3669"/>
<dbReference type="HOGENOM" id="CLU_009583_18_2_6"/>
<dbReference type="UniPathway" id="UPA00164"/>
<dbReference type="Proteomes" id="UP000002529">
    <property type="component" value="Chromosome"/>
</dbReference>
<dbReference type="GO" id="GO:0005829">
    <property type="term" value="C:cytosol"/>
    <property type="evidence" value="ECO:0007669"/>
    <property type="project" value="TreeGrafter"/>
</dbReference>
<dbReference type="GO" id="GO:0009011">
    <property type="term" value="F:alpha-1,4-glucan glucosyltransferase (ADP-glucose donor) activity"/>
    <property type="evidence" value="ECO:0007669"/>
    <property type="project" value="UniProtKB-UniRule"/>
</dbReference>
<dbReference type="GO" id="GO:0004373">
    <property type="term" value="F:alpha-1,4-glucan glucosyltransferase (UDP-glucose donor) activity"/>
    <property type="evidence" value="ECO:0007669"/>
    <property type="project" value="InterPro"/>
</dbReference>
<dbReference type="GO" id="GO:0005978">
    <property type="term" value="P:glycogen biosynthetic process"/>
    <property type="evidence" value="ECO:0007669"/>
    <property type="project" value="UniProtKB-UniRule"/>
</dbReference>
<dbReference type="CDD" id="cd03791">
    <property type="entry name" value="GT5_Glycogen_synthase_DULL1-like"/>
    <property type="match status" value="1"/>
</dbReference>
<dbReference type="FunFam" id="3.40.50.2000:FF:000008">
    <property type="entry name" value="Glycogen synthase"/>
    <property type="match status" value="1"/>
</dbReference>
<dbReference type="FunFam" id="3.40.50.2000:FF:000011">
    <property type="entry name" value="Glycogen synthase"/>
    <property type="match status" value="1"/>
</dbReference>
<dbReference type="Gene3D" id="3.40.50.2000">
    <property type="entry name" value="Glycogen Phosphorylase B"/>
    <property type="match status" value="2"/>
</dbReference>
<dbReference type="HAMAP" id="MF_00484">
    <property type="entry name" value="Glycogen_synth"/>
    <property type="match status" value="1"/>
</dbReference>
<dbReference type="InterPro" id="IPR001296">
    <property type="entry name" value="Glyco_trans_1"/>
</dbReference>
<dbReference type="InterPro" id="IPR011835">
    <property type="entry name" value="GS/SS"/>
</dbReference>
<dbReference type="InterPro" id="IPR013534">
    <property type="entry name" value="Starch_synth_cat_dom"/>
</dbReference>
<dbReference type="NCBIfam" id="TIGR02095">
    <property type="entry name" value="glgA"/>
    <property type="match status" value="1"/>
</dbReference>
<dbReference type="NCBIfam" id="NF001899">
    <property type="entry name" value="PRK00654.1-2"/>
    <property type="match status" value="1"/>
</dbReference>
<dbReference type="PANTHER" id="PTHR45825:SF11">
    <property type="entry name" value="ALPHA AMYLASE DOMAIN-CONTAINING PROTEIN"/>
    <property type="match status" value="1"/>
</dbReference>
<dbReference type="PANTHER" id="PTHR45825">
    <property type="entry name" value="GRANULE-BOUND STARCH SYNTHASE 1, CHLOROPLASTIC/AMYLOPLASTIC"/>
    <property type="match status" value="1"/>
</dbReference>
<dbReference type="Pfam" id="PF08323">
    <property type="entry name" value="Glyco_transf_5"/>
    <property type="match status" value="1"/>
</dbReference>
<dbReference type="Pfam" id="PF00534">
    <property type="entry name" value="Glycos_transf_1"/>
    <property type="match status" value="1"/>
</dbReference>
<dbReference type="SUPFAM" id="SSF53756">
    <property type="entry name" value="UDP-Glycosyltransferase/glycogen phosphorylase"/>
    <property type="match status" value="1"/>
</dbReference>
<proteinExistence type="inferred from homology"/>
<reference key="1">
    <citation type="journal article" date="2005" name="Nucleic Acids Res.">
        <title>Genome dynamics and diversity of Shigella species, the etiologic agents of bacillary dysentery.</title>
        <authorList>
            <person name="Yang F."/>
            <person name="Yang J."/>
            <person name="Zhang X."/>
            <person name="Chen L."/>
            <person name="Jiang Y."/>
            <person name="Yan Y."/>
            <person name="Tang X."/>
            <person name="Wang J."/>
            <person name="Xiong Z."/>
            <person name="Dong J."/>
            <person name="Xue Y."/>
            <person name="Zhu Y."/>
            <person name="Xu X."/>
            <person name="Sun L."/>
            <person name="Chen S."/>
            <person name="Nie H."/>
            <person name="Peng J."/>
            <person name="Xu J."/>
            <person name="Wang Y."/>
            <person name="Yuan Z."/>
            <person name="Wen Y."/>
            <person name="Yao Z."/>
            <person name="Shen Y."/>
            <person name="Qiang B."/>
            <person name="Hou Y."/>
            <person name="Yu J."/>
            <person name="Jin Q."/>
        </authorList>
    </citation>
    <scope>NUCLEOTIDE SEQUENCE [LARGE SCALE GENOMIC DNA]</scope>
    <source>
        <strain>Ss046</strain>
    </source>
</reference>
<protein>
    <recommendedName>
        <fullName evidence="1">Glycogen synthase</fullName>
        <ecNumber evidence="1">2.4.1.21</ecNumber>
    </recommendedName>
    <alternativeName>
        <fullName evidence="1">Starch [bacterial glycogen] synthase</fullName>
    </alternativeName>
</protein>
<gene>
    <name evidence="1" type="primary">glgA</name>
    <name type="ordered locus">SSON_3669</name>
</gene>
<keyword id="KW-0320">Glycogen biosynthesis</keyword>
<keyword id="KW-0328">Glycosyltransferase</keyword>
<keyword id="KW-1185">Reference proteome</keyword>
<keyword id="KW-0808">Transferase</keyword>
<feature type="chain" id="PRO_0000230265" description="Glycogen synthase">
    <location>
        <begin position="1"/>
        <end position="477"/>
    </location>
</feature>
<feature type="binding site" evidence="1">
    <location>
        <position position="15"/>
    </location>
    <ligand>
        <name>ADP-alpha-D-glucose</name>
        <dbReference type="ChEBI" id="CHEBI:57498"/>
    </ligand>
</feature>
<organism>
    <name type="scientific">Shigella sonnei (strain Ss046)</name>
    <dbReference type="NCBI Taxonomy" id="300269"/>
    <lineage>
        <taxon>Bacteria</taxon>
        <taxon>Pseudomonadati</taxon>
        <taxon>Pseudomonadota</taxon>
        <taxon>Gammaproteobacteria</taxon>
        <taxon>Enterobacterales</taxon>
        <taxon>Enterobacteriaceae</taxon>
        <taxon>Shigella</taxon>
    </lineage>
</organism>
<evidence type="ECO:0000255" key="1">
    <source>
        <dbReference type="HAMAP-Rule" id="MF_00484"/>
    </source>
</evidence>
<comment type="function">
    <text evidence="1">Synthesizes alpha-1,4-glucan chains using ADP-glucose.</text>
</comment>
<comment type="catalytic activity">
    <reaction evidence="1">
        <text>[(1-&gt;4)-alpha-D-glucosyl](n) + ADP-alpha-D-glucose = [(1-&gt;4)-alpha-D-glucosyl](n+1) + ADP + H(+)</text>
        <dbReference type="Rhea" id="RHEA:18189"/>
        <dbReference type="Rhea" id="RHEA-COMP:9584"/>
        <dbReference type="Rhea" id="RHEA-COMP:9587"/>
        <dbReference type="ChEBI" id="CHEBI:15378"/>
        <dbReference type="ChEBI" id="CHEBI:15444"/>
        <dbReference type="ChEBI" id="CHEBI:57498"/>
        <dbReference type="ChEBI" id="CHEBI:456216"/>
        <dbReference type="EC" id="2.4.1.21"/>
    </reaction>
</comment>
<comment type="pathway">
    <text evidence="1">Glycan biosynthesis; glycogen biosynthesis.</text>
</comment>
<comment type="similarity">
    <text evidence="1">Belongs to the glycosyltransferase 1 family. Bacterial/plant glycogen synthase subfamily.</text>
</comment>
<name>GLGA_SHISS</name>
<sequence>MQVLHVCSEMFPLLKTGGLADVIGALPAAQIADGVDARVLLPAFPDIRRGVTDAQVVSRRDTFAGHITLLFGHYNGVGIYLIDAPHLYDRPGSPYHDTNLFAYTDNVLRFALLGWVGAEMASGLDPFWRPDVVHAHDWHAGLAPAYLAARGRPAKSVFTVHNLAYQGMFYAHHMNDIQLPWSFFNIHGLEFNGQISFLKAGLYYADHITAVSPTYAREITEPQFAYGMEGLLQQRHREGRLSGVLNGVDEKIWSPETDLLLASRYTRDTLEDKAENKRQLQIAMGLKVDDKVPLFAVVSRLTSQKGLDLVLEALPGLLEQGGQLALLGAGDPVLQEGFLAAAAEYPGQVGVQIGYHEAFSHRIMGGADVILVPSRFEPCGLTQLYGLKYGTLPLVRRTGGLADTVSDCSLENLADGVASGFVFEDNNAWSLLRAIRRAFVLWSRPSLWRFVQRQAMAMDFSWQVAAKSYRELYYRLK</sequence>
<accession>Q3YW96</accession>